<accession>Q9C641</accession>
<accession>Q0WU55</accession>
<comment type="function">
    <text evidence="1">Mitochondrial GTPase that catalyzes the GTP-dependent ribosomal translocation step during translation elongation. During this step, the ribosome changes from the pre-translocational (PRE) to the post-translocational (POST) state as the newly formed A-site-bound peptidyl-tRNA and P-site-bound deacylated tRNA move to the P and E sites, respectively. Catalyzes the coordinated movement of the two tRNA molecules, the mRNA and conformational changes in the ribosome.</text>
</comment>
<comment type="pathway">
    <text evidence="1">Protein biosynthesis; polypeptide chain elongation.</text>
</comment>
<comment type="subcellular location">
    <subcellularLocation>
        <location evidence="1 2">Mitochondrion</location>
    </subcellularLocation>
</comment>
<comment type="tissue specificity">
    <text evidence="3">Expressed in cotyledons and adult leaves at the same levels.</text>
</comment>
<comment type="similarity">
    <text evidence="4">Belongs to the TRAFAC class translation factor GTPase superfamily. Classic translation factor GTPase family. EF-G/EF-2 subfamily.</text>
</comment>
<evidence type="ECO:0000255" key="1">
    <source>
        <dbReference type="HAMAP-Rule" id="MF_03061"/>
    </source>
</evidence>
<evidence type="ECO:0000269" key="2">
    <source>
    </source>
</evidence>
<evidence type="ECO:0000269" key="3">
    <source>
    </source>
</evidence>
<evidence type="ECO:0000305" key="4"/>
<organism>
    <name type="scientific">Arabidopsis thaliana</name>
    <name type="common">Mouse-ear cress</name>
    <dbReference type="NCBI Taxonomy" id="3702"/>
    <lineage>
        <taxon>Eukaryota</taxon>
        <taxon>Viridiplantae</taxon>
        <taxon>Streptophyta</taxon>
        <taxon>Embryophyta</taxon>
        <taxon>Tracheophyta</taxon>
        <taxon>Spermatophyta</taxon>
        <taxon>Magnoliopsida</taxon>
        <taxon>eudicotyledons</taxon>
        <taxon>Gunneridae</taxon>
        <taxon>Pentapetalae</taxon>
        <taxon>rosids</taxon>
        <taxon>malvids</taxon>
        <taxon>Brassicales</taxon>
        <taxon>Brassicaceae</taxon>
        <taxon>Camelineae</taxon>
        <taxon>Arabidopsis</taxon>
    </lineage>
</organism>
<sequence>MARFPTSPAPNRLLRLFSSNKRSSSPTAALLTGDFQLIRHFSAGTAARVAKDEKEPWWKESMDKLRNIGISAHIDSGKTTLTERVLFYTGRIHEIHEVRGRDGVGAKMDSMDLEREKGITIQSAATYCTWKDYKVNIIDTPGHVDFTIEVERALRVLDGAILVLCSVGGVQSQSITVDRQMRRYEVPRVAFINKLDRMGADPWKVLNQARAKLRHHSAAVQVPIGLEENFQGLIDLIHVKAYFFHGSSGENVVAGDIPADMEGLVAEKRRELIETVSEVDDVLAEKFLNDEPVSASELEEAIRRATIAQTFVPVFMGSAFKNKGVQPLLDGVVSFLPSPNEVNNYALDQNNNEERVTLTGSPDGPLVALAFKLEEGRFGQLTYLRVYEGVIKKGDFIINVNTGKRIKVPRLVRMHSNDMEDIQEAHAGQIVAVFGIECASGDTFTDGSVKYTMTSMNVPEPVMSLAVQPVSKDSGGQFSKALNRFQKEDPTFRVGLDPESGQTIISGMGELHLDIYVERMRREYKVDATVGKPRVNFRETITQRAEFDYLHKKQSGGAGQYGRVTGYVEPLPPGSKEKFEFENMIVGQAIPSGFIPAIEKGFKEAANSGSLIGHPVENLRIVLTDGASHAVDSSELAFKMAAIYAFRLCYTAARPVILEPVMLVELKVPTEFQGTVAGDINKRKGIIVGNDQEGDDSVITANVPLNNMFGYSTSLRSMTQGKGEFTMEYKEHSAVSNEVQAQLVNAYSASKATE</sequence>
<reference key="1">
    <citation type="journal article" date="2000" name="Nature">
        <title>Sequence and analysis of chromosome 1 of the plant Arabidopsis thaliana.</title>
        <authorList>
            <person name="Theologis A."/>
            <person name="Ecker J.R."/>
            <person name="Palm C.J."/>
            <person name="Federspiel N.A."/>
            <person name="Kaul S."/>
            <person name="White O."/>
            <person name="Alonso J."/>
            <person name="Altafi H."/>
            <person name="Araujo R."/>
            <person name="Bowman C.L."/>
            <person name="Brooks S.Y."/>
            <person name="Buehler E."/>
            <person name="Chan A."/>
            <person name="Chao Q."/>
            <person name="Chen H."/>
            <person name="Cheuk R.F."/>
            <person name="Chin C.W."/>
            <person name="Chung M.K."/>
            <person name="Conn L."/>
            <person name="Conway A.B."/>
            <person name="Conway A.R."/>
            <person name="Creasy T.H."/>
            <person name="Dewar K."/>
            <person name="Dunn P."/>
            <person name="Etgu P."/>
            <person name="Feldblyum T.V."/>
            <person name="Feng J.-D."/>
            <person name="Fong B."/>
            <person name="Fujii C.Y."/>
            <person name="Gill J.E."/>
            <person name="Goldsmith A.D."/>
            <person name="Haas B."/>
            <person name="Hansen N.F."/>
            <person name="Hughes B."/>
            <person name="Huizar L."/>
            <person name="Hunter J.L."/>
            <person name="Jenkins J."/>
            <person name="Johnson-Hopson C."/>
            <person name="Khan S."/>
            <person name="Khaykin E."/>
            <person name="Kim C.J."/>
            <person name="Koo H.L."/>
            <person name="Kremenetskaia I."/>
            <person name="Kurtz D.B."/>
            <person name="Kwan A."/>
            <person name="Lam B."/>
            <person name="Langin-Hooper S."/>
            <person name="Lee A."/>
            <person name="Lee J.M."/>
            <person name="Lenz C.A."/>
            <person name="Li J.H."/>
            <person name="Li Y.-P."/>
            <person name="Lin X."/>
            <person name="Liu S.X."/>
            <person name="Liu Z.A."/>
            <person name="Luros J.S."/>
            <person name="Maiti R."/>
            <person name="Marziali A."/>
            <person name="Militscher J."/>
            <person name="Miranda M."/>
            <person name="Nguyen M."/>
            <person name="Nierman W.C."/>
            <person name="Osborne B.I."/>
            <person name="Pai G."/>
            <person name="Peterson J."/>
            <person name="Pham P.K."/>
            <person name="Rizzo M."/>
            <person name="Rooney T."/>
            <person name="Rowley D."/>
            <person name="Sakano H."/>
            <person name="Salzberg S.L."/>
            <person name="Schwartz J.R."/>
            <person name="Shinn P."/>
            <person name="Southwick A.M."/>
            <person name="Sun H."/>
            <person name="Tallon L.J."/>
            <person name="Tambunga G."/>
            <person name="Toriumi M.J."/>
            <person name="Town C.D."/>
            <person name="Utterback T."/>
            <person name="Van Aken S."/>
            <person name="Vaysberg M."/>
            <person name="Vysotskaia V.S."/>
            <person name="Walker M."/>
            <person name="Wu D."/>
            <person name="Yu G."/>
            <person name="Fraser C.M."/>
            <person name="Venter J.C."/>
            <person name="Davis R.W."/>
        </authorList>
    </citation>
    <scope>NUCLEOTIDE SEQUENCE [LARGE SCALE GENOMIC DNA]</scope>
    <source>
        <strain>cv. Columbia</strain>
    </source>
</reference>
<reference key="2">
    <citation type="journal article" date="2017" name="Plant J.">
        <title>Araport11: a complete reannotation of the Arabidopsis thaliana reference genome.</title>
        <authorList>
            <person name="Cheng C.Y."/>
            <person name="Krishnakumar V."/>
            <person name="Chan A.P."/>
            <person name="Thibaud-Nissen F."/>
            <person name="Schobel S."/>
            <person name="Town C.D."/>
        </authorList>
    </citation>
    <scope>GENOME REANNOTATION</scope>
    <source>
        <strain>cv. Columbia</strain>
    </source>
</reference>
<reference key="3">
    <citation type="submission" date="2006-07" db="EMBL/GenBank/DDBJ databases">
        <title>Large-scale analysis of RIKEN Arabidopsis full-length (RAFL) cDNAs.</title>
        <authorList>
            <person name="Totoki Y."/>
            <person name="Seki M."/>
            <person name="Ishida J."/>
            <person name="Nakajima M."/>
            <person name="Enju A."/>
            <person name="Kamiya A."/>
            <person name="Narusaka M."/>
            <person name="Shin-i T."/>
            <person name="Nakagawa M."/>
            <person name="Sakamoto N."/>
            <person name="Oishi K."/>
            <person name="Kohara Y."/>
            <person name="Kobayashi M."/>
            <person name="Toyoda A."/>
            <person name="Sakaki Y."/>
            <person name="Sakurai T."/>
            <person name="Iida K."/>
            <person name="Akiyama K."/>
            <person name="Satou M."/>
            <person name="Toyoda T."/>
            <person name="Konagaya A."/>
            <person name="Carninci P."/>
            <person name="Kawai J."/>
            <person name="Hayashizaki Y."/>
            <person name="Shinozaki K."/>
        </authorList>
    </citation>
    <scope>NUCLEOTIDE SEQUENCE [LARGE SCALE MRNA] OF 1-683</scope>
    <source>
        <strain>cv. Columbia</strain>
    </source>
</reference>
<reference key="4">
    <citation type="journal article" date="2004" name="Plant Cell">
        <title>Experimental analysis of the Arabidopsis mitochondrial proteome highlights signaling and regulatory components, provides assessment of targeting prediction programs, and indicates plant-specific mitochondrial proteins.</title>
        <authorList>
            <person name="Heazlewood J.L."/>
            <person name="Tonti-Filippini J.S."/>
            <person name="Gout A.M."/>
            <person name="Day D.A."/>
            <person name="Whelan J."/>
            <person name="Millar A.H."/>
        </authorList>
    </citation>
    <scope>IDENTIFICATION BY MASS SPECTROMETRY</scope>
    <scope>SUBCELLULAR LOCATION [LARGE SCALE ANALYSIS]</scope>
    <source>
        <strain>cv. Landsberg erecta</strain>
    </source>
</reference>
<reference key="5">
    <citation type="journal article" date="2007" name="BMC Plant Biol.">
        <title>Mutations in a plastid-localized elongation factor G alter early stages of plastid development in Arabidopsis thaliana.</title>
        <authorList>
            <person name="Ruppel N.J."/>
            <person name="Hangarter R.P."/>
        </authorList>
    </citation>
    <scope>GENE FAMILY</scope>
    <scope>TISSUE SPECIFICITY</scope>
</reference>
<keyword id="KW-0251">Elongation factor</keyword>
<keyword id="KW-0342">GTP-binding</keyword>
<keyword id="KW-0496">Mitochondrion</keyword>
<keyword id="KW-0547">Nucleotide-binding</keyword>
<keyword id="KW-0648">Protein biosynthesis</keyword>
<keyword id="KW-1185">Reference proteome</keyword>
<keyword id="KW-0809">Transit peptide</keyword>
<dbReference type="EMBL" id="AC083835">
    <property type="protein sequence ID" value="AAG50635.1"/>
    <property type="molecule type" value="Genomic_DNA"/>
</dbReference>
<dbReference type="EMBL" id="CP002684">
    <property type="protein sequence ID" value="AEE32115.1"/>
    <property type="molecule type" value="Genomic_DNA"/>
</dbReference>
<dbReference type="EMBL" id="AK227329">
    <property type="protein sequence ID" value="BAE99343.1"/>
    <property type="molecule type" value="mRNA"/>
</dbReference>
<dbReference type="PIR" id="D96510">
    <property type="entry name" value="D96510"/>
</dbReference>
<dbReference type="RefSeq" id="NP_175135.1">
    <property type="nucleotide sequence ID" value="NM_103595.4"/>
</dbReference>
<dbReference type="SMR" id="Q9C641"/>
<dbReference type="BioGRID" id="26322">
    <property type="interactions" value="2"/>
</dbReference>
<dbReference type="FunCoup" id="Q9C641">
    <property type="interactions" value="3559"/>
</dbReference>
<dbReference type="STRING" id="3702.Q9C641"/>
<dbReference type="iPTMnet" id="Q9C641"/>
<dbReference type="PaxDb" id="3702-AT1G45332.1"/>
<dbReference type="ProteomicsDB" id="247081"/>
<dbReference type="EnsemblPlants" id="AT1G45332.1">
    <property type="protein sequence ID" value="AT1G45332.1"/>
    <property type="gene ID" value="AT1G45332"/>
</dbReference>
<dbReference type="GeneID" id="841097"/>
<dbReference type="Gramene" id="AT1G45332.1">
    <property type="protein sequence ID" value="AT1G45332.1"/>
    <property type="gene ID" value="AT1G45332"/>
</dbReference>
<dbReference type="KEGG" id="ath:AT1G45332"/>
<dbReference type="Araport" id="AT1G45332"/>
<dbReference type="TAIR" id="AT1G45332"/>
<dbReference type="eggNOG" id="KOG0465">
    <property type="taxonomic scope" value="Eukaryota"/>
</dbReference>
<dbReference type="HOGENOM" id="CLU_002794_4_0_1"/>
<dbReference type="InParanoid" id="Q9C641"/>
<dbReference type="OMA" id="TEYIPSC"/>
<dbReference type="OrthoDB" id="198619at2759"/>
<dbReference type="PhylomeDB" id="Q9C641"/>
<dbReference type="UniPathway" id="UPA00345"/>
<dbReference type="PRO" id="PR:Q9C641"/>
<dbReference type="Proteomes" id="UP000006548">
    <property type="component" value="Chromosome 1"/>
</dbReference>
<dbReference type="ExpressionAtlas" id="Q9C641">
    <property type="expression patterns" value="baseline and differential"/>
</dbReference>
<dbReference type="GO" id="GO:0005739">
    <property type="term" value="C:mitochondrion"/>
    <property type="evidence" value="ECO:0007005"/>
    <property type="project" value="TAIR"/>
</dbReference>
<dbReference type="GO" id="GO:0005524">
    <property type="term" value="F:ATP binding"/>
    <property type="evidence" value="ECO:0007005"/>
    <property type="project" value="TAIR"/>
</dbReference>
<dbReference type="GO" id="GO:0005525">
    <property type="term" value="F:GTP binding"/>
    <property type="evidence" value="ECO:0007669"/>
    <property type="project" value="UniProtKB-UniRule"/>
</dbReference>
<dbReference type="GO" id="GO:0003924">
    <property type="term" value="F:GTPase activity"/>
    <property type="evidence" value="ECO:0007669"/>
    <property type="project" value="UniProtKB-UniRule"/>
</dbReference>
<dbReference type="GO" id="GO:0003746">
    <property type="term" value="F:translation elongation factor activity"/>
    <property type="evidence" value="ECO:0007669"/>
    <property type="project" value="UniProtKB-UniRule"/>
</dbReference>
<dbReference type="GO" id="GO:0070125">
    <property type="term" value="P:mitochondrial translational elongation"/>
    <property type="evidence" value="ECO:0007669"/>
    <property type="project" value="UniProtKB-UniRule"/>
</dbReference>
<dbReference type="CDD" id="cd01886">
    <property type="entry name" value="EF-G"/>
    <property type="match status" value="1"/>
</dbReference>
<dbReference type="CDD" id="cd16262">
    <property type="entry name" value="EFG_III"/>
    <property type="match status" value="1"/>
</dbReference>
<dbReference type="CDD" id="cd01434">
    <property type="entry name" value="EFG_mtEFG1_IV"/>
    <property type="match status" value="1"/>
</dbReference>
<dbReference type="CDD" id="cd04097">
    <property type="entry name" value="mtEFG1_C"/>
    <property type="match status" value="1"/>
</dbReference>
<dbReference type="CDD" id="cd04091">
    <property type="entry name" value="mtEFG1_II_like"/>
    <property type="match status" value="1"/>
</dbReference>
<dbReference type="FunFam" id="3.30.230.10:FF:000003">
    <property type="entry name" value="Elongation factor G"/>
    <property type="match status" value="1"/>
</dbReference>
<dbReference type="FunFam" id="3.30.70.240:FF:000001">
    <property type="entry name" value="Elongation factor G"/>
    <property type="match status" value="1"/>
</dbReference>
<dbReference type="FunFam" id="3.30.70.870:FF:000001">
    <property type="entry name" value="Elongation factor G"/>
    <property type="match status" value="1"/>
</dbReference>
<dbReference type="FunFam" id="2.40.30.10:FF:000022">
    <property type="entry name" value="Elongation factor G, mitochondrial"/>
    <property type="match status" value="1"/>
</dbReference>
<dbReference type="FunFam" id="3.40.50.300:FF:000558">
    <property type="entry name" value="Elongation factor G, mitochondrial"/>
    <property type="match status" value="1"/>
</dbReference>
<dbReference type="Gene3D" id="3.30.230.10">
    <property type="match status" value="1"/>
</dbReference>
<dbReference type="Gene3D" id="3.30.70.240">
    <property type="match status" value="1"/>
</dbReference>
<dbReference type="Gene3D" id="3.30.70.870">
    <property type="entry name" value="Elongation Factor G (Translational Gtpase), domain 3"/>
    <property type="match status" value="1"/>
</dbReference>
<dbReference type="Gene3D" id="3.40.50.300">
    <property type="entry name" value="P-loop containing nucleotide triphosphate hydrolases"/>
    <property type="match status" value="1"/>
</dbReference>
<dbReference type="Gene3D" id="2.40.30.10">
    <property type="entry name" value="Translation factors"/>
    <property type="match status" value="1"/>
</dbReference>
<dbReference type="HAMAP" id="MF_00054_B">
    <property type="entry name" value="EF_G_EF_2_B"/>
    <property type="match status" value="1"/>
</dbReference>
<dbReference type="InterPro" id="IPR041095">
    <property type="entry name" value="EFG_II"/>
</dbReference>
<dbReference type="InterPro" id="IPR009022">
    <property type="entry name" value="EFG_III"/>
</dbReference>
<dbReference type="InterPro" id="IPR035647">
    <property type="entry name" value="EFG_III/V"/>
</dbReference>
<dbReference type="InterPro" id="IPR047872">
    <property type="entry name" value="EFG_IV"/>
</dbReference>
<dbReference type="InterPro" id="IPR035649">
    <property type="entry name" value="EFG_V"/>
</dbReference>
<dbReference type="InterPro" id="IPR000640">
    <property type="entry name" value="EFG_V-like"/>
</dbReference>
<dbReference type="InterPro" id="IPR004161">
    <property type="entry name" value="EFTu-like_2"/>
</dbReference>
<dbReference type="InterPro" id="IPR031157">
    <property type="entry name" value="G_TR_CS"/>
</dbReference>
<dbReference type="InterPro" id="IPR027417">
    <property type="entry name" value="P-loop_NTPase"/>
</dbReference>
<dbReference type="InterPro" id="IPR020568">
    <property type="entry name" value="Ribosomal_Su5_D2-typ_SF"/>
</dbReference>
<dbReference type="InterPro" id="IPR014721">
    <property type="entry name" value="Ribsml_uS5_D2-typ_fold_subgr"/>
</dbReference>
<dbReference type="InterPro" id="IPR005225">
    <property type="entry name" value="Small_GTP-bd"/>
</dbReference>
<dbReference type="InterPro" id="IPR000795">
    <property type="entry name" value="T_Tr_GTP-bd_dom"/>
</dbReference>
<dbReference type="InterPro" id="IPR009000">
    <property type="entry name" value="Transl_B-barrel_sf"/>
</dbReference>
<dbReference type="InterPro" id="IPR004540">
    <property type="entry name" value="Transl_elong_EFG/EF2"/>
</dbReference>
<dbReference type="InterPro" id="IPR005517">
    <property type="entry name" value="Transl_elong_EFG/EF2_IV"/>
</dbReference>
<dbReference type="NCBIfam" id="TIGR00484">
    <property type="entry name" value="EF-G"/>
    <property type="match status" value="1"/>
</dbReference>
<dbReference type="NCBIfam" id="NF009381">
    <property type="entry name" value="PRK12740.1-5"/>
    <property type="match status" value="1"/>
</dbReference>
<dbReference type="NCBIfam" id="TIGR00231">
    <property type="entry name" value="small_GTP"/>
    <property type="match status" value="1"/>
</dbReference>
<dbReference type="PANTHER" id="PTHR43636">
    <property type="entry name" value="ELONGATION FACTOR G, MITOCHONDRIAL"/>
    <property type="match status" value="1"/>
</dbReference>
<dbReference type="PANTHER" id="PTHR43636:SF2">
    <property type="entry name" value="ELONGATION FACTOR G, MITOCHONDRIAL"/>
    <property type="match status" value="1"/>
</dbReference>
<dbReference type="Pfam" id="PF00679">
    <property type="entry name" value="EFG_C"/>
    <property type="match status" value="1"/>
</dbReference>
<dbReference type="Pfam" id="PF14492">
    <property type="entry name" value="EFG_III"/>
    <property type="match status" value="1"/>
</dbReference>
<dbReference type="Pfam" id="PF03764">
    <property type="entry name" value="EFG_IV"/>
    <property type="match status" value="1"/>
</dbReference>
<dbReference type="Pfam" id="PF00009">
    <property type="entry name" value="GTP_EFTU"/>
    <property type="match status" value="1"/>
</dbReference>
<dbReference type="Pfam" id="PF03144">
    <property type="entry name" value="GTP_EFTU_D2"/>
    <property type="match status" value="1"/>
</dbReference>
<dbReference type="PRINTS" id="PR00315">
    <property type="entry name" value="ELONGATNFCT"/>
</dbReference>
<dbReference type="SMART" id="SM00838">
    <property type="entry name" value="EFG_C"/>
    <property type="match status" value="1"/>
</dbReference>
<dbReference type="SMART" id="SM00889">
    <property type="entry name" value="EFG_IV"/>
    <property type="match status" value="1"/>
</dbReference>
<dbReference type="SUPFAM" id="SSF54980">
    <property type="entry name" value="EF-G C-terminal domain-like"/>
    <property type="match status" value="2"/>
</dbReference>
<dbReference type="SUPFAM" id="SSF52540">
    <property type="entry name" value="P-loop containing nucleoside triphosphate hydrolases"/>
    <property type="match status" value="1"/>
</dbReference>
<dbReference type="SUPFAM" id="SSF54211">
    <property type="entry name" value="Ribosomal protein S5 domain 2-like"/>
    <property type="match status" value="1"/>
</dbReference>
<dbReference type="SUPFAM" id="SSF50447">
    <property type="entry name" value="Translation proteins"/>
    <property type="match status" value="1"/>
</dbReference>
<dbReference type="PROSITE" id="PS00301">
    <property type="entry name" value="G_TR_1"/>
    <property type="match status" value="1"/>
</dbReference>
<dbReference type="PROSITE" id="PS51722">
    <property type="entry name" value="G_TR_2"/>
    <property type="match status" value="1"/>
</dbReference>
<proteinExistence type="evidence at protein level"/>
<protein>
    <recommendedName>
        <fullName>Elongation factor G-1, mitochondrial</fullName>
        <shortName evidence="1">EF-Gmt</shortName>
        <shortName evidence="1">mEF-G 1-1</shortName>
    </recommendedName>
    <alternativeName>
        <fullName evidence="1">Elongation factor G1-1</fullName>
    </alternativeName>
</protein>
<name>EFGM1_ARATH</name>
<feature type="transit peptide" description="Mitochondrion" evidence="1">
    <location>
        <begin position="1"/>
        <end position="17"/>
    </location>
</feature>
<feature type="chain" id="PRO_0000007446" description="Elongation factor G-1, mitochondrial">
    <location>
        <begin position="18"/>
        <end position="754"/>
    </location>
</feature>
<feature type="domain" description="tr-type G">
    <location>
        <begin position="63"/>
        <end position="340"/>
    </location>
</feature>
<feature type="binding site" evidence="1">
    <location>
        <begin position="72"/>
        <end position="79"/>
    </location>
    <ligand>
        <name>GTP</name>
        <dbReference type="ChEBI" id="CHEBI:37565"/>
    </ligand>
</feature>
<feature type="binding site" evidence="1">
    <location>
        <begin position="139"/>
        <end position="143"/>
    </location>
    <ligand>
        <name>GTP</name>
        <dbReference type="ChEBI" id="CHEBI:37565"/>
    </ligand>
</feature>
<feature type="binding site" evidence="1">
    <location>
        <begin position="193"/>
        <end position="196"/>
    </location>
    <ligand>
        <name>GTP</name>
        <dbReference type="ChEBI" id="CHEBI:37565"/>
    </ligand>
</feature>
<feature type="sequence conflict" description="In Ref. 3; BAE99343." evidence="4" ref="3">
    <original>D</original>
    <variation>G</variation>
    <location>
        <position position="139"/>
    </location>
</feature>
<feature type="sequence conflict" description="In Ref. 3; BAE99343." evidence="4" ref="3">
    <original>A</original>
    <variation>T</variation>
    <location>
        <position position="627"/>
    </location>
</feature>
<gene>
    <name type="primary">MEFG1</name>
    <name type="ordered locus">At1g45332</name>
    <name type="ORF">F2G19.2</name>
</gene>